<keyword id="KW-0002">3D-structure</keyword>
<keyword id="KW-0131">Cell cycle</keyword>
<keyword id="KW-0132">Cell division</keyword>
<keyword id="KW-1003">Cell membrane</keyword>
<keyword id="KW-0963">Cytoplasm</keyword>
<keyword id="KW-0206">Cytoskeleton</keyword>
<keyword id="KW-0209">Deafness</keyword>
<keyword id="KW-0472">Membrane</keyword>
<keyword id="KW-0498">Mitosis</keyword>
<keyword id="KW-0547">Nucleotide-binding</keyword>
<keyword id="KW-0597">Phosphoprotein</keyword>
<keyword id="KW-1267">Proteomics identification</keyword>
<keyword id="KW-1185">Reference proteome</keyword>
<keyword id="KW-0677">Repeat</keyword>
<keyword id="KW-0802">TPR repeat</keyword>
<keyword id="KW-0813">Transport</keyword>
<gene>
    <name type="primary">GPSM2</name>
    <name type="synonym">LGN</name>
</gene>
<reference key="1">
    <citation type="journal article" date="1996" name="Gene">
        <title>Identification and cDNA cloning of a novel human mosaic protein, LGN, based on interaction with G alpha i2.</title>
        <authorList>
            <person name="Mochizuki N."/>
            <person name="Cho G."/>
            <person name="Wen B."/>
            <person name="Insel P.A."/>
        </authorList>
    </citation>
    <scope>NUCLEOTIDE SEQUENCE [MRNA]</scope>
    <scope>INTERACTION WITH GNAI2</scope>
    <source>
        <tissue>B-cell</tissue>
    </source>
</reference>
<reference key="2">
    <citation type="submission" date="2008-07" db="EMBL/GenBank/DDBJ databases">
        <title>Involvement of C0671 overexpression in breast cancer cell growth.</title>
        <authorList>
            <person name="Katagiri T."/>
            <person name="Fukukawa C."/>
            <person name="Nakamura Y."/>
        </authorList>
    </citation>
    <scope>NUCLEOTIDE SEQUENCE [MRNA]</scope>
</reference>
<reference key="3">
    <citation type="journal article" date="2006" name="Nature">
        <title>The DNA sequence and biological annotation of human chromosome 1.</title>
        <authorList>
            <person name="Gregory S.G."/>
            <person name="Barlow K.F."/>
            <person name="McLay K.E."/>
            <person name="Kaul R."/>
            <person name="Swarbreck D."/>
            <person name="Dunham A."/>
            <person name="Scott C.E."/>
            <person name="Howe K.L."/>
            <person name="Woodfine K."/>
            <person name="Spencer C.C.A."/>
            <person name="Jones M.C."/>
            <person name="Gillson C."/>
            <person name="Searle S."/>
            <person name="Zhou Y."/>
            <person name="Kokocinski F."/>
            <person name="McDonald L."/>
            <person name="Evans R."/>
            <person name="Phillips K."/>
            <person name="Atkinson A."/>
            <person name="Cooper R."/>
            <person name="Jones C."/>
            <person name="Hall R.E."/>
            <person name="Andrews T.D."/>
            <person name="Lloyd C."/>
            <person name="Ainscough R."/>
            <person name="Almeida J.P."/>
            <person name="Ambrose K.D."/>
            <person name="Anderson F."/>
            <person name="Andrew R.W."/>
            <person name="Ashwell R.I.S."/>
            <person name="Aubin K."/>
            <person name="Babbage A.K."/>
            <person name="Bagguley C.L."/>
            <person name="Bailey J."/>
            <person name="Beasley H."/>
            <person name="Bethel G."/>
            <person name="Bird C.P."/>
            <person name="Bray-Allen S."/>
            <person name="Brown J.Y."/>
            <person name="Brown A.J."/>
            <person name="Buckley D."/>
            <person name="Burton J."/>
            <person name="Bye J."/>
            <person name="Carder C."/>
            <person name="Chapman J.C."/>
            <person name="Clark S.Y."/>
            <person name="Clarke G."/>
            <person name="Clee C."/>
            <person name="Cobley V."/>
            <person name="Collier R.E."/>
            <person name="Corby N."/>
            <person name="Coville G.J."/>
            <person name="Davies J."/>
            <person name="Deadman R."/>
            <person name="Dunn M."/>
            <person name="Earthrowl M."/>
            <person name="Ellington A.G."/>
            <person name="Errington H."/>
            <person name="Frankish A."/>
            <person name="Frankland J."/>
            <person name="French L."/>
            <person name="Garner P."/>
            <person name="Garnett J."/>
            <person name="Gay L."/>
            <person name="Ghori M.R.J."/>
            <person name="Gibson R."/>
            <person name="Gilby L.M."/>
            <person name="Gillett W."/>
            <person name="Glithero R.J."/>
            <person name="Grafham D.V."/>
            <person name="Griffiths C."/>
            <person name="Griffiths-Jones S."/>
            <person name="Grocock R."/>
            <person name="Hammond S."/>
            <person name="Harrison E.S.I."/>
            <person name="Hart E."/>
            <person name="Haugen E."/>
            <person name="Heath P.D."/>
            <person name="Holmes S."/>
            <person name="Holt K."/>
            <person name="Howden P.J."/>
            <person name="Hunt A.R."/>
            <person name="Hunt S.E."/>
            <person name="Hunter G."/>
            <person name="Isherwood J."/>
            <person name="James R."/>
            <person name="Johnson C."/>
            <person name="Johnson D."/>
            <person name="Joy A."/>
            <person name="Kay M."/>
            <person name="Kershaw J.K."/>
            <person name="Kibukawa M."/>
            <person name="Kimberley A.M."/>
            <person name="King A."/>
            <person name="Knights A.J."/>
            <person name="Lad H."/>
            <person name="Laird G."/>
            <person name="Lawlor S."/>
            <person name="Leongamornlert D.A."/>
            <person name="Lloyd D.M."/>
            <person name="Loveland J."/>
            <person name="Lovell J."/>
            <person name="Lush M.J."/>
            <person name="Lyne R."/>
            <person name="Martin S."/>
            <person name="Mashreghi-Mohammadi M."/>
            <person name="Matthews L."/>
            <person name="Matthews N.S.W."/>
            <person name="McLaren S."/>
            <person name="Milne S."/>
            <person name="Mistry S."/>
            <person name="Moore M.J.F."/>
            <person name="Nickerson T."/>
            <person name="O'Dell C.N."/>
            <person name="Oliver K."/>
            <person name="Palmeiri A."/>
            <person name="Palmer S.A."/>
            <person name="Parker A."/>
            <person name="Patel D."/>
            <person name="Pearce A.V."/>
            <person name="Peck A.I."/>
            <person name="Pelan S."/>
            <person name="Phelps K."/>
            <person name="Phillimore B.J."/>
            <person name="Plumb R."/>
            <person name="Rajan J."/>
            <person name="Raymond C."/>
            <person name="Rouse G."/>
            <person name="Saenphimmachak C."/>
            <person name="Sehra H.K."/>
            <person name="Sheridan E."/>
            <person name="Shownkeen R."/>
            <person name="Sims S."/>
            <person name="Skuce C.D."/>
            <person name="Smith M."/>
            <person name="Steward C."/>
            <person name="Subramanian S."/>
            <person name="Sycamore N."/>
            <person name="Tracey A."/>
            <person name="Tromans A."/>
            <person name="Van Helmond Z."/>
            <person name="Wall M."/>
            <person name="Wallis J.M."/>
            <person name="White S."/>
            <person name="Whitehead S.L."/>
            <person name="Wilkinson J.E."/>
            <person name="Willey D.L."/>
            <person name="Williams H."/>
            <person name="Wilming L."/>
            <person name="Wray P.W."/>
            <person name="Wu Z."/>
            <person name="Coulson A."/>
            <person name="Vaudin M."/>
            <person name="Sulston J.E."/>
            <person name="Durbin R.M."/>
            <person name="Hubbard T."/>
            <person name="Wooster R."/>
            <person name="Dunham I."/>
            <person name="Carter N.P."/>
            <person name="McVean G."/>
            <person name="Ross M.T."/>
            <person name="Harrow J."/>
            <person name="Olson M.V."/>
            <person name="Beck S."/>
            <person name="Rogers J."/>
            <person name="Bentley D.R."/>
        </authorList>
    </citation>
    <scope>NUCLEOTIDE SEQUENCE [LARGE SCALE GENOMIC DNA]</scope>
</reference>
<reference key="4">
    <citation type="submission" date="2005-07" db="EMBL/GenBank/DDBJ databases">
        <authorList>
            <person name="Mural R.J."/>
            <person name="Istrail S."/>
            <person name="Sutton G.G."/>
            <person name="Florea L."/>
            <person name="Halpern A.L."/>
            <person name="Mobarry C.M."/>
            <person name="Lippert R."/>
            <person name="Walenz B."/>
            <person name="Shatkay H."/>
            <person name="Dew I."/>
            <person name="Miller J.R."/>
            <person name="Flanigan M.J."/>
            <person name="Edwards N.J."/>
            <person name="Bolanos R."/>
            <person name="Fasulo D."/>
            <person name="Halldorsson B.V."/>
            <person name="Hannenhalli S."/>
            <person name="Turner R."/>
            <person name="Yooseph S."/>
            <person name="Lu F."/>
            <person name="Nusskern D.R."/>
            <person name="Shue B.C."/>
            <person name="Zheng X.H."/>
            <person name="Zhong F."/>
            <person name="Delcher A.L."/>
            <person name="Huson D.H."/>
            <person name="Kravitz S.A."/>
            <person name="Mouchard L."/>
            <person name="Reinert K."/>
            <person name="Remington K.A."/>
            <person name="Clark A.G."/>
            <person name="Waterman M.S."/>
            <person name="Eichler E.E."/>
            <person name="Adams M.D."/>
            <person name="Hunkapiller M.W."/>
            <person name="Myers E.W."/>
            <person name="Venter J.C."/>
        </authorList>
    </citation>
    <scope>NUCLEOTIDE SEQUENCE [LARGE SCALE GENOMIC DNA]</scope>
</reference>
<reference key="5">
    <citation type="journal article" date="2004" name="Genome Res.">
        <title>The status, quality, and expansion of the NIH full-length cDNA project: the Mammalian Gene Collection (MGC).</title>
        <authorList>
            <consortium name="The MGC Project Team"/>
        </authorList>
    </citation>
    <scope>NUCLEOTIDE SEQUENCE [LARGE SCALE MRNA]</scope>
    <source>
        <tissue>Muscle</tissue>
    </source>
</reference>
<reference key="6">
    <citation type="submission" date="2002-07" db="EMBL/GenBank/DDBJ databases">
        <title>cDNA clones of human proteins involved in signal transduction sequenced by the Guthrie cDNA resource center (www.cdna.org).</title>
        <authorList>
            <person name="Puhl H.L. III"/>
            <person name="Ikeda S.R."/>
            <person name="Aronstam R.S."/>
        </authorList>
    </citation>
    <scope>NUCLEOTIDE SEQUENCE [LARGE SCALE MRNA] OF 8-684</scope>
    <source>
        <tissue>Brain</tissue>
    </source>
</reference>
<reference key="7">
    <citation type="submission" date="2004-06" db="EMBL/GenBank/DDBJ databases">
        <title>Cloning of human full open reading frames in Gateway(TM) system entry vector (pDONR201).</title>
        <authorList>
            <person name="Ebert L."/>
            <person name="Schick M."/>
            <person name="Neubert P."/>
            <person name="Schatten R."/>
            <person name="Henze S."/>
            <person name="Korn B."/>
        </authorList>
    </citation>
    <scope>NUCLEOTIDE SEQUENCE [LARGE SCALE MRNA] OF 8-684</scope>
</reference>
<reference key="8">
    <citation type="journal article" date="2001" name="Nat. Cell Biol.">
        <title>A mammalian partner of inscuteable binds NuMA and regulates mitotic spindle organization.</title>
        <authorList>
            <person name="Du Q."/>
            <person name="Stukenberg P.T."/>
            <person name="Macara I.G."/>
        </authorList>
    </citation>
    <scope>FUNCTION</scope>
    <scope>INTERACTION WITH NUMA1</scope>
    <scope>SUBCELLULAR LOCATION</scope>
</reference>
<reference key="9">
    <citation type="journal article" date="2005" name="J. Biol. Chem.">
        <title>Direct binding of Lgl2 to LGN during mitosis and its requirement for normal cell division.</title>
        <authorList>
            <person name="Yasumi M."/>
            <person name="Sakisaka T."/>
            <person name="Hoshino T."/>
            <person name="Kimura T."/>
            <person name="Sakamoto Y."/>
            <person name="Yamanaka T."/>
            <person name="Ohno S."/>
            <person name="Takai Y."/>
        </authorList>
    </citation>
    <scope>FUNCTION</scope>
    <scope>INTERACTION WITH LLGL2</scope>
    <scope>SUBCELLULAR LOCATION</scope>
    <source>
        <tissue>Brain</tissue>
    </source>
</reference>
<reference key="10">
    <citation type="journal article" date="2006" name="Biochem. Biophys. Res. Commun.">
        <title>Two forms of human Inscuteable-related protein that links Par3 to the Pins homologues LGN and AGS3.</title>
        <authorList>
            <person name="Izaki T."/>
            <person name="Kamakura S."/>
            <person name="Kohjima M."/>
            <person name="Sumimoto H."/>
        </authorList>
    </citation>
    <scope>INTERACTION WITH INSC</scope>
    <scope>IDENTIFICATION IN A COMPLEX WITH INSC AND F2RL2</scope>
</reference>
<reference key="11">
    <citation type="journal article" date="2008" name="Proc. Natl. Acad. Sci. U.S.A.">
        <title>A quantitative atlas of mitotic phosphorylation.</title>
        <authorList>
            <person name="Dephoure N."/>
            <person name="Zhou C."/>
            <person name="Villen J."/>
            <person name="Beausoleil S.A."/>
            <person name="Bakalarski C.E."/>
            <person name="Elledge S.J."/>
            <person name="Gygi S.P."/>
        </authorList>
    </citation>
    <scope>PHOSPHORYLATION [LARGE SCALE ANALYSIS] AT SER-483; THR-486 AND SER-541</scope>
    <scope>IDENTIFICATION BY MASS SPECTROMETRY [LARGE SCALE ANALYSIS]</scope>
    <source>
        <tissue>Cervix carcinoma</tissue>
    </source>
</reference>
<reference key="12">
    <citation type="journal article" date="2010" name="Am. J. Hum. Genet.">
        <title>Whole exome sequencing and homozygosity mapping identify mutation in the cell polarity protein GPSM2 as the cause of nonsyndromic hearing loss DFNB82.</title>
        <authorList>
            <person name="Walsh T."/>
            <person name="Shahin H."/>
            <person name="Elkan-Miller T."/>
            <person name="Lee M.K."/>
            <person name="Thornton A.M."/>
            <person name="Roeb W."/>
            <person name="Abu Rayyan A."/>
            <person name="Loulus S."/>
            <person name="Avraham K.B."/>
            <person name="King M.C."/>
            <person name="Kanaan M."/>
        </authorList>
    </citation>
    <scope>INVOLVEMENT IN CMCS</scope>
</reference>
<reference key="13">
    <citation type="journal article" date="2010" name="Sci. Signal.">
        <title>Quantitative phosphoproteomics reveals widespread full phosphorylation site occupancy during mitosis.</title>
        <authorList>
            <person name="Olsen J.V."/>
            <person name="Vermeulen M."/>
            <person name="Santamaria A."/>
            <person name="Kumar C."/>
            <person name="Miller M.L."/>
            <person name="Jensen L.J."/>
            <person name="Gnad F."/>
            <person name="Cox J."/>
            <person name="Jensen T.S."/>
            <person name="Nigg E.A."/>
            <person name="Brunak S."/>
            <person name="Mann M."/>
        </authorList>
    </citation>
    <scope>PHOSPHORYLATION [LARGE SCALE ANALYSIS] AT SER-408 AND SER-565</scope>
    <scope>IDENTIFICATION BY MASS SPECTROMETRY [LARGE SCALE ANALYSIS]</scope>
    <source>
        <tissue>Cervix carcinoma</tissue>
    </source>
</reference>
<reference key="14">
    <citation type="journal article" date="2011" name="Mol. Cell">
        <title>LGN/mInsc and LGN/NuMA complex structures suggest distinct functions in asymmetric cell division for the Par3/mInsc/LGN and Galphai/LGN/NuMA pathways.</title>
        <authorList>
            <person name="Zhu J."/>
            <person name="Wen W."/>
            <person name="Zheng Z."/>
            <person name="Shang Y."/>
            <person name="Wei Z."/>
            <person name="Xiao Z."/>
            <person name="Pan Z."/>
            <person name="Du Q."/>
            <person name="Wang W."/>
            <person name="Zhang M."/>
        </authorList>
    </citation>
    <scope>FUNCTION</scope>
    <scope>SUBCELLULAR LOCATION</scope>
    <scope>MUTAGENESIS OF ARG-228 AND ARG-243</scope>
</reference>
<reference key="15">
    <citation type="journal article" date="2012" name="Am. J. Hum. Genet.">
        <title>GPSM2 mutations cause the brain malformations and hearing loss in Chudley-McCullough syndrome.</title>
        <authorList>
            <person name="Doherty D."/>
            <person name="Chudley A.E."/>
            <person name="Coghlan G."/>
            <person name="Ishak G.E."/>
            <person name="Innes A.M."/>
            <person name="Lemire E.G."/>
            <person name="Rogers R.C."/>
            <person name="Mhanni A.A."/>
            <person name="Phelps I.G."/>
            <person name="Jones S.J."/>
            <person name="Zhan S.H."/>
            <person name="Fejes A.P."/>
            <person name="Shahin H."/>
            <person name="Kanaan M."/>
            <person name="Akay H."/>
            <person name="Tekin M."/>
            <person name="Triggs-Raine B."/>
            <person name="Zelinski T."/>
        </authorList>
    </citation>
    <scope>INVOLVEMENT IN CMCS</scope>
</reference>
<reference key="16">
    <citation type="journal article" date="2012" name="Nat. Cell Biol.">
        <title>Chromosome- and spindle-pole-derived signals generate an intrinsic code for spindle position and orientation.</title>
        <authorList>
            <person name="Kiyomitsu T."/>
            <person name="Cheeseman I.M."/>
        </authorList>
    </citation>
    <scope>FUNCTION</scope>
    <scope>INTERACTION WITH NUMA1</scope>
    <scope>SUBCELLULAR LOCATION</scope>
</reference>
<reference key="17">
    <citation type="journal article" date="2013" name="J. Proteome Res.">
        <title>Toward a comprehensive characterization of a human cancer cell phosphoproteome.</title>
        <authorList>
            <person name="Zhou H."/>
            <person name="Di Palma S."/>
            <person name="Preisinger C."/>
            <person name="Peng M."/>
            <person name="Polat A.N."/>
            <person name="Heck A.J."/>
            <person name="Mohammed S."/>
        </authorList>
    </citation>
    <scope>PHOSPHORYLATION [LARGE SCALE ANALYSIS] AT SER-565</scope>
    <scope>IDENTIFICATION BY MASS SPECTROMETRY [LARGE SCALE ANALYSIS]</scope>
    <source>
        <tissue>Erythroleukemia</tissue>
    </source>
</reference>
<reference key="18">
    <citation type="journal article" date="2016" name="Dev. Cell">
        <title>SAPCD2 controls spindle orientation and asymmetric divisions by negatively regulating the Galphai-LGN-NuMA ternary complex.</title>
        <authorList>
            <person name="Chiu C.W."/>
            <person name="Monat C."/>
            <person name="Robitaille M."/>
            <person name="Lacomme M."/>
            <person name="Daulat A.M."/>
            <person name="Macleod G."/>
            <person name="McNeill H."/>
            <person name="Cayouette M."/>
            <person name="Angers S."/>
        </authorList>
    </citation>
    <scope>IDENTIFICATION IN A SPINDLE ORIENTATION COMPLEX</scope>
    <scope>SUBCELLULAR LOCATION</scope>
</reference>
<reference key="19">
    <citation type="journal article" date="2016" name="J. Biol. Chem.">
        <title>Nuclear mitotic apparatus (NuMA) interacts with and regulates astrin at the mitotic spindle.</title>
        <authorList>
            <person name="Chu X."/>
            <person name="Chen X."/>
            <person name="Wan Q."/>
            <person name="Zheng Z."/>
            <person name="Du Q."/>
        </authorList>
    </citation>
    <scope>INTERACTION WITH NUMA1</scope>
</reference>
<reference key="20">
    <citation type="journal article" date="2011" name="Proc. Natl. Acad. Sci. U.S.A.">
        <title>Structural basis for interaction between the conserved cell polarity proteins Inscuteable and Leu-Gly-Asn repeat-enriched protein (LGN).</title>
        <authorList>
            <person name="Yuzawa S."/>
            <person name="Kamakura S."/>
            <person name="Iwakiri Y."/>
            <person name="Hayase J."/>
            <person name="Sumimoto H."/>
        </authorList>
    </citation>
    <scope>X-RAY CRYSTALLOGRAPHY (2.60 ANGSTROMS) OF 20-421 IN COMPLEX WITH INSC</scope>
    <scope>INTERACTION WITH INSC; NUMA1; FRMPD1 AND FRMPD4</scope>
    <scope>SUBCELLULAR LOCATION</scope>
    <scope>MUTAGENESIS OF ARG-228 AND ASN-290</scope>
</reference>
<reference key="21">
    <citation type="journal article" date="2015" name="Acta Crystallogr. F">
        <title>Structural basis for the recognition of the scaffold protein Frmpd4/Preso1 by the TPR domain of the adaptor protein LGN.</title>
        <authorList>
            <person name="Takayanagi H."/>
            <person name="Yuzawa S."/>
            <person name="Sumimoto H."/>
        </authorList>
    </citation>
    <scope>X-RAY CRYSTALLOGRAPHY (1.50 ANGSTROMS) OF 20-421 IN COMPLEX WITH FRMPD4</scope>
    <scope>INTERACTION WITH FRMPD4</scope>
</reference>
<protein>
    <recommendedName>
        <fullName>G-protein-signaling modulator 2</fullName>
    </recommendedName>
    <alternativeName>
        <fullName evidence="16">Mosaic protein LGN</fullName>
    </alternativeName>
</protein>
<name>GPSM2_HUMAN</name>
<organism>
    <name type="scientific">Homo sapiens</name>
    <name type="common">Human</name>
    <dbReference type="NCBI Taxonomy" id="9606"/>
    <lineage>
        <taxon>Eukaryota</taxon>
        <taxon>Metazoa</taxon>
        <taxon>Chordata</taxon>
        <taxon>Craniata</taxon>
        <taxon>Vertebrata</taxon>
        <taxon>Euteleostomi</taxon>
        <taxon>Mammalia</taxon>
        <taxon>Eutheria</taxon>
        <taxon>Euarchontoglires</taxon>
        <taxon>Primates</taxon>
        <taxon>Haplorrhini</taxon>
        <taxon>Catarrhini</taxon>
        <taxon>Hominidae</taxon>
        <taxon>Homo</taxon>
    </lineage>
</organism>
<evidence type="ECO:0000250" key="1">
    <source>
        <dbReference type="UniProtKB" id="Q8VDU0"/>
    </source>
</evidence>
<evidence type="ECO:0000255" key="2"/>
<evidence type="ECO:0000255" key="3">
    <source>
        <dbReference type="PROSITE-ProRule" id="PRU00097"/>
    </source>
</evidence>
<evidence type="ECO:0000269" key="4">
    <source>
    </source>
</evidence>
<evidence type="ECO:0000269" key="5">
    <source>
    </source>
</evidence>
<evidence type="ECO:0000269" key="6">
    <source>
    </source>
</evidence>
<evidence type="ECO:0000269" key="7">
    <source>
    </source>
</evidence>
<evidence type="ECO:0000269" key="8">
    <source>
    </source>
</evidence>
<evidence type="ECO:0000269" key="9">
    <source>
    </source>
</evidence>
<evidence type="ECO:0000269" key="10">
    <source>
    </source>
</evidence>
<evidence type="ECO:0000269" key="11">
    <source>
    </source>
</evidence>
<evidence type="ECO:0000269" key="12">
    <source>
    </source>
</evidence>
<evidence type="ECO:0000269" key="13">
    <source>
    </source>
</evidence>
<evidence type="ECO:0000269" key="14">
    <source>
    </source>
</evidence>
<evidence type="ECO:0000269" key="15">
    <source>
    </source>
</evidence>
<evidence type="ECO:0000303" key="16">
    <source>
    </source>
</evidence>
<evidence type="ECO:0000305" key="17"/>
<evidence type="ECO:0000305" key="18">
    <source>
    </source>
</evidence>
<evidence type="ECO:0000305" key="19">
    <source>
    </source>
</evidence>
<evidence type="ECO:0007744" key="20">
    <source>
    </source>
</evidence>
<evidence type="ECO:0007744" key="21">
    <source>
    </source>
</evidence>
<evidence type="ECO:0007744" key="22">
    <source>
    </source>
</evidence>
<evidence type="ECO:0007829" key="23">
    <source>
        <dbReference type="PDB" id="3SF4"/>
    </source>
</evidence>
<evidence type="ECO:0007829" key="24">
    <source>
        <dbReference type="PDB" id="4WND"/>
    </source>
</evidence>
<evidence type="ECO:0007829" key="25">
    <source>
        <dbReference type="PDB" id="4WNF"/>
    </source>
</evidence>
<proteinExistence type="evidence at protein level"/>
<sequence>MEENLISMREDHSFHVRYRMEASCLELALEGERLCKSGDCRAGVSFFEAAVQVGTEDLKTLSAIYSQLGNAYFYLHDYAKALEYHHHDLTLARTIGDQLGEAKASGNLGNTLKVLGNFDEAIVCCQRHLDISRELNDKVGEARALYNLGNVYHAKGKSFGCPGPQDVGEFPEEVRDALQAAVDFYEENLSLVTALGDRAAQGRAFGNLGNTHYLLGNFRDAVIAHEQRLLIAKEFGDKAAERRAYSNLGNAYIFLGEFETASEYYKKTLLLARQLKDRAVEAQSCYSLGNTYTLLQDYEKAIDYHLKHLAIAQELNDRIGEGRACWSLGNAYTALGNHDQAMHFAEKHLEISREVGDKSGELTARLNLSDLQMVLGLSYSTNNSIMSENTEIDSSLNGVRPKLGRRHSMENMELMKLTPEKVQNWNSEILAKQKPLIAKPSAKLLFVNRLKGKKYKTNSSTKVLQDASNSIDHRIPNSQRKISADTIGDEGFFDLLSRFQSNRMDDQRCCLQEKNCHTASTTTSSTPPKMMLKTSSVPVVSPNTDEFLDLLASSQSRRLDDQRASFSNLPGLRLTQNSQSVLSHLMTNDNKEADEDFFDILVKCQGSRLDDQRCAPPPATTKGPTVPDEDFFSLILRSQGKRMDEQRVLLQRDQNRDTDFGLKDFLQNNALLEFKNSGKKSADH</sequence>
<accession>P81274</accession>
<accession>Q5T1N8</accession>
<accession>Q6IBL7</accession>
<accession>Q8N0Z5</accession>
<dbReference type="EMBL" id="U54999">
    <property type="protein sequence ID" value="AAB40385.1"/>
    <property type="status" value="ALT_INIT"/>
    <property type="molecule type" value="mRNA"/>
</dbReference>
<dbReference type="EMBL" id="AB445462">
    <property type="protein sequence ID" value="BAH84760.1"/>
    <property type="molecule type" value="mRNA"/>
</dbReference>
<dbReference type="EMBL" id="AL449266">
    <property type="status" value="NOT_ANNOTATED_CDS"/>
    <property type="molecule type" value="Genomic_DNA"/>
</dbReference>
<dbReference type="EMBL" id="CH471122">
    <property type="protein sequence ID" value="EAW56340.1"/>
    <property type="molecule type" value="Genomic_DNA"/>
</dbReference>
<dbReference type="EMBL" id="BC027732">
    <property type="protein sequence ID" value="AAH27732.1"/>
    <property type="status" value="ALT_INIT"/>
    <property type="molecule type" value="mRNA"/>
</dbReference>
<dbReference type="EMBL" id="AY136740">
    <property type="protein sequence ID" value="AAN01266.1"/>
    <property type="molecule type" value="mRNA"/>
</dbReference>
<dbReference type="EMBL" id="CR456786">
    <property type="protein sequence ID" value="CAG33067.1"/>
    <property type="molecule type" value="mRNA"/>
</dbReference>
<dbReference type="CCDS" id="CCDS792.2"/>
<dbReference type="PIR" id="JC5334">
    <property type="entry name" value="G02540"/>
</dbReference>
<dbReference type="RefSeq" id="NP_001307967.1">
    <property type="nucleotide sequence ID" value="NM_001321038.2"/>
</dbReference>
<dbReference type="RefSeq" id="NP_001307968.1">
    <property type="nucleotide sequence ID" value="NM_001321039.3"/>
</dbReference>
<dbReference type="RefSeq" id="NP_037428.3">
    <property type="nucleotide sequence ID" value="NM_013296.4"/>
</dbReference>
<dbReference type="RefSeq" id="XP_011539603.1">
    <property type="nucleotide sequence ID" value="XM_011541301.2"/>
</dbReference>
<dbReference type="RefSeq" id="XP_011539604.1">
    <property type="nucleotide sequence ID" value="XM_011541302.4"/>
</dbReference>
<dbReference type="RefSeq" id="XP_016856586.1">
    <property type="nucleotide sequence ID" value="XM_017001097.3"/>
</dbReference>
<dbReference type="RefSeq" id="XP_016856587.1">
    <property type="nucleotide sequence ID" value="XM_017001098.3"/>
</dbReference>
<dbReference type="RefSeq" id="XP_047274679.1">
    <property type="nucleotide sequence ID" value="XM_047418723.1"/>
</dbReference>
<dbReference type="RefSeq" id="XP_047274680.1">
    <property type="nucleotide sequence ID" value="XM_047418724.1"/>
</dbReference>
<dbReference type="RefSeq" id="XP_054192159.1">
    <property type="nucleotide sequence ID" value="XM_054336184.1"/>
</dbReference>
<dbReference type="RefSeq" id="XP_054192160.1">
    <property type="nucleotide sequence ID" value="XM_054336185.1"/>
</dbReference>
<dbReference type="RefSeq" id="XP_054192161.1">
    <property type="nucleotide sequence ID" value="XM_054336186.1"/>
</dbReference>
<dbReference type="RefSeq" id="XP_054192162.1">
    <property type="nucleotide sequence ID" value="XM_054336187.1"/>
</dbReference>
<dbReference type="RefSeq" id="XP_054192163.1">
    <property type="nucleotide sequence ID" value="XM_054336188.1"/>
</dbReference>
<dbReference type="PDB" id="3SF4">
    <property type="method" value="X-ray"/>
    <property type="resolution" value="2.60 A"/>
    <property type="chains" value="A/B/C=20-421"/>
</dbReference>
<dbReference type="PDB" id="4WND">
    <property type="method" value="X-ray"/>
    <property type="resolution" value="1.50 A"/>
    <property type="chains" value="A=20-421"/>
</dbReference>
<dbReference type="PDB" id="4WNE">
    <property type="method" value="X-ray"/>
    <property type="resolution" value="2.00 A"/>
    <property type="chains" value="A=20-421"/>
</dbReference>
<dbReference type="PDB" id="4WNF">
    <property type="method" value="X-ray"/>
    <property type="resolution" value="2.90 A"/>
    <property type="chains" value="A=20-421"/>
</dbReference>
<dbReference type="PDB" id="4WNG">
    <property type="method" value="X-ray"/>
    <property type="resolution" value="2.11 A"/>
    <property type="chains" value="A=20-421"/>
</dbReference>
<dbReference type="PDB" id="5A6C">
    <property type="method" value="X-ray"/>
    <property type="resolution" value="2.90 A"/>
    <property type="chains" value="A/B=22-357"/>
</dbReference>
<dbReference type="PDB" id="6HC2">
    <property type="method" value="X-ray"/>
    <property type="resolution" value="4.31 A"/>
    <property type="chains" value="A/C/E/G/I/K/M/O/Q/S/U/W=14-374"/>
</dbReference>
<dbReference type="PDBsum" id="3SF4"/>
<dbReference type="PDBsum" id="4WND"/>
<dbReference type="PDBsum" id="4WNE"/>
<dbReference type="PDBsum" id="4WNF"/>
<dbReference type="PDBsum" id="4WNG"/>
<dbReference type="PDBsum" id="5A6C"/>
<dbReference type="PDBsum" id="6HC2"/>
<dbReference type="SMR" id="P81274"/>
<dbReference type="BioGRID" id="118949">
    <property type="interactions" value="27"/>
</dbReference>
<dbReference type="CORUM" id="P81274"/>
<dbReference type="DIP" id="DIP-399N"/>
<dbReference type="FunCoup" id="P81274">
    <property type="interactions" value="742"/>
</dbReference>
<dbReference type="IntAct" id="P81274">
    <property type="interactions" value="23"/>
</dbReference>
<dbReference type="MINT" id="P81274"/>
<dbReference type="STRING" id="9606.ENSP00000385510"/>
<dbReference type="GlyGen" id="P81274">
    <property type="glycosylation" value="1 site"/>
</dbReference>
<dbReference type="iPTMnet" id="P81274"/>
<dbReference type="PhosphoSitePlus" id="P81274"/>
<dbReference type="BioMuta" id="GPSM2"/>
<dbReference type="DMDM" id="294862507"/>
<dbReference type="jPOST" id="P81274"/>
<dbReference type="MassIVE" id="P81274"/>
<dbReference type="PaxDb" id="9606-ENSP00000385510"/>
<dbReference type="PeptideAtlas" id="P81274"/>
<dbReference type="ProteomicsDB" id="57693"/>
<dbReference type="Pumba" id="P81274"/>
<dbReference type="Antibodypedia" id="1983">
    <property type="antibodies" value="195 antibodies from 33 providers"/>
</dbReference>
<dbReference type="DNASU" id="29899"/>
<dbReference type="Ensembl" id="ENST00000264126.9">
    <property type="protein sequence ID" value="ENSP00000264126.3"/>
    <property type="gene ID" value="ENSG00000121957.15"/>
</dbReference>
<dbReference type="Ensembl" id="ENST00000406462.6">
    <property type="protein sequence ID" value="ENSP00000385510.1"/>
    <property type="gene ID" value="ENSG00000121957.15"/>
</dbReference>
<dbReference type="Ensembl" id="ENST00000446797.2">
    <property type="protein sequence ID" value="ENSP00000392138.2"/>
    <property type="gene ID" value="ENSG00000121957.15"/>
</dbReference>
<dbReference type="Ensembl" id="ENST00000642355.1">
    <property type="protein sequence ID" value="ENSP00000496104.1"/>
    <property type="gene ID" value="ENSG00000121957.15"/>
</dbReference>
<dbReference type="Ensembl" id="ENST00000645164.2">
    <property type="protein sequence ID" value="ENSP00000496756.2"/>
    <property type="gene ID" value="ENSG00000121957.15"/>
</dbReference>
<dbReference type="Ensembl" id="ENST00000676184.1">
    <property type="protein sequence ID" value="ENSP00000502178.1"/>
    <property type="gene ID" value="ENSG00000121957.15"/>
</dbReference>
<dbReference type="GeneID" id="29899"/>
<dbReference type="KEGG" id="hsa:29899"/>
<dbReference type="MANE-Select" id="ENST00000264126.9">
    <property type="protein sequence ID" value="ENSP00000264126.3"/>
    <property type="RefSeq nucleotide sequence ID" value="NM_013296.5"/>
    <property type="RefSeq protein sequence ID" value="NP_037428.3"/>
</dbReference>
<dbReference type="UCSC" id="uc010ovc.3">
    <property type="organism name" value="human"/>
</dbReference>
<dbReference type="AGR" id="HGNC:29501"/>
<dbReference type="CTD" id="29899"/>
<dbReference type="DisGeNET" id="29899"/>
<dbReference type="GeneCards" id="GPSM2"/>
<dbReference type="HGNC" id="HGNC:29501">
    <property type="gene designation" value="GPSM2"/>
</dbReference>
<dbReference type="HPA" id="ENSG00000121957">
    <property type="expression patterns" value="Tissue enhanced (tongue)"/>
</dbReference>
<dbReference type="MalaCards" id="GPSM2"/>
<dbReference type="MIM" id="604213">
    <property type="type" value="phenotype"/>
</dbReference>
<dbReference type="MIM" id="609245">
    <property type="type" value="gene"/>
</dbReference>
<dbReference type="neXtProt" id="NX_P81274"/>
<dbReference type="OpenTargets" id="ENSG00000121957"/>
<dbReference type="Orphanet" id="314597">
    <property type="disease" value="Chudley-McCullough syndrome"/>
</dbReference>
<dbReference type="Orphanet" id="90636">
    <property type="disease" value="Rare autosomal recessive non-syndromic sensorineural deafness type DFNB"/>
</dbReference>
<dbReference type="PharmGKB" id="PA134993615"/>
<dbReference type="VEuPathDB" id="HostDB:ENSG00000121957"/>
<dbReference type="eggNOG" id="KOG1130">
    <property type="taxonomic scope" value="Eukaryota"/>
</dbReference>
<dbReference type="GeneTree" id="ENSGT00940000161257"/>
<dbReference type="HOGENOM" id="CLU_012445_1_0_1"/>
<dbReference type="InParanoid" id="P81274"/>
<dbReference type="OMA" id="NQSVLGH"/>
<dbReference type="OrthoDB" id="286233at2759"/>
<dbReference type="PAN-GO" id="P81274">
    <property type="GO annotations" value="4 GO annotations based on evolutionary models"/>
</dbReference>
<dbReference type="PhylomeDB" id="P81274"/>
<dbReference type="TreeFam" id="TF328344"/>
<dbReference type="PathwayCommons" id="P81274"/>
<dbReference type="Reactome" id="R-HSA-418594">
    <property type="pathway name" value="G alpha (i) signalling events"/>
</dbReference>
<dbReference type="SignaLink" id="P81274"/>
<dbReference type="SIGNOR" id="P81274"/>
<dbReference type="BioGRID-ORCS" id="29899">
    <property type="hits" value="15 hits in 1162 CRISPR screens"/>
</dbReference>
<dbReference type="CD-CODE" id="8C2F96ED">
    <property type="entry name" value="Centrosome"/>
</dbReference>
<dbReference type="CD-CODE" id="FF4792F2">
    <property type="entry name" value="Row 1-specific tip complex condensates"/>
</dbReference>
<dbReference type="ChiTaRS" id="GPSM2">
    <property type="organism name" value="human"/>
</dbReference>
<dbReference type="EvolutionaryTrace" id="P81274"/>
<dbReference type="GeneWiki" id="GPSM2"/>
<dbReference type="GenomeRNAi" id="29899"/>
<dbReference type="Pharos" id="P81274">
    <property type="development level" value="Tbio"/>
</dbReference>
<dbReference type="PRO" id="PR:P81274"/>
<dbReference type="Proteomes" id="UP000005640">
    <property type="component" value="Chromosome 1"/>
</dbReference>
<dbReference type="RNAct" id="P81274">
    <property type="molecule type" value="protein"/>
</dbReference>
<dbReference type="Bgee" id="ENSG00000121957">
    <property type="expression patterns" value="Expressed in tibia and 197 other cell types or tissues"/>
</dbReference>
<dbReference type="ExpressionAtlas" id="P81274">
    <property type="expression patterns" value="baseline and differential"/>
</dbReference>
<dbReference type="GO" id="GO:0005938">
    <property type="term" value="C:cell cortex"/>
    <property type="evidence" value="ECO:0000314"/>
    <property type="project" value="UniProtKB"/>
</dbReference>
<dbReference type="GO" id="GO:0099738">
    <property type="term" value="C:cell cortex region"/>
    <property type="evidence" value="ECO:0000314"/>
    <property type="project" value="UniProtKB"/>
</dbReference>
<dbReference type="GO" id="GO:0005813">
    <property type="term" value="C:centrosome"/>
    <property type="evidence" value="ECO:0000314"/>
    <property type="project" value="HPA"/>
</dbReference>
<dbReference type="GO" id="GO:0005737">
    <property type="term" value="C:cytoplasm"/>
    <property type="evidence" value="ECO:0000314"/>
    <property type="project" value="UniProtKB"/>
</dbReference>
<dbReference type="GO" id="GO:0005829">
    <property type="term" value="C:cytosol"/>
    <property type="evidence" value="ECO:0000314"/>
    <property type="project" value="HPA"/>
</dbReference>
<dbReference type="GO" id="GO:0097575">
    <property type="term" value="C:lateral cell cortex"/>
    <property type="evidence" value="ECO:0000314"/>
    <property type="project" value="UniProtKB"/>
</dbReference>
<dbReference type="GO" id="GO:0016328">
    <property type="term" value="C:lateral plasma membrane"/>
    <property type="evidence" value="ECO:0007669"/>
    <property type="project" value="UniProtKB-SubCell"/>
</dbReference>
<dbReference type="GO" id="GO:0097431">
    <property type="term" value="C:mitotic spindle pole"/>
    <property type="evidence" value="ECO:0000314"/>
    <property type="project" value="UniProtKB"/>
</dbReference>
<dbReference type="GO" id="GO:0014069">
    <property type="term" value="C:postsynaptic density"/>
    <property type="evidence" value="ECO:0007669"/>
    <property type="project" value="Ensembl"/>
</dbReference>
<dbReference type="GO" id="GO:0032991">
    <property type="term" value="C:protein-containing complex"/>
    <property type="evidence" value="ECO:0000314"/>
    <property type="project" value="UniProtKB"/>
</dbReference>
<dbReference type="GO" id="GO:0070840">
    <property type="term" value="F:dynein complex binding"/>
    <property type="evidence" value="ECO:0000314"/>
    <property type="project" value="UniProtKB"/>
</dbReference>
<dbReference type="GO" id="GO:0001965">
    <property type="term" value="F:G-protein alpha-subunit binding"/>
    <property type="evidence" value="ECO:0000318"/>
    <property type="project" value="GO_Central"/>
</dbReference>
<dbReference type="GO" id="GO:0005092">
    <property type="term" value="F:GDP-dissociation inhibitor activity"/>
    <property type="evidence" value="ECO:0000250"/>
    <property type="project" value="UniProtKB"/>
</dbReference>
<dbReference type="GO" id="GO:0042802">
    <property type="term" value="F:identical protein binding"/>
    <property type="evidence" value="ECO:0000353"/>
    <property type="project" value="IntAct"/>
</dbReference>
<dbReference type="GO" id="GO:0000166">
    <property type="term" value="F:nucleotide binding"/>
    <property type="evidence" value="ECO:0007669"/>
    <property type="project" value="UniProtKB-KW"/>
</dbReference>
<dbReference type="GO" id="GO:0019904">
    <property type="term" value="F:protein domain specific binding"/>
    <property type="evidence" value="ECO:0000353"/>
    <property type="project" value="UniProtKB"/>
</dbReference>
<dbReference type="GO" id="GO:0051301">
    <property type="term" value="P:cell division"/>
    <property type="evidence" value="ECO:0007669"/>
    <property type="project" value="UniProtKB-KW"/>
</dbReference>
<dbReference type="GO" id="GO:0000132">
    <property type="term" value="P:establishment of mitotic spindle orientation"/>
    <property type="evidence" value="ECO:0000315"/>
    <property type="project" value="UniProtKB"/>
</dbReference>
<dbReference type="GO" id="GO:0007186">
    <property type="term" value="P:G protein-coupled receptor signaling pathway"/>
    <property type="evidence" value="ECO:0000304"/>
    <property type="project" value="ProtInc"/>
</dbReference>
<dbReference type="GO" id="GO:0051661">
    <property type="term" value="P:maintenance of centrosome location"/>
    <property type="evidence" value="ECO:0000315"/>
    <property type="project" value="UniProtKB"/>
</dbReference>
<dbReference type="GO" id="GO:0007052">
    <property type="term" value="P:mitotic spindle organization"/>
    <property type="evidence" value="ECO:0000315"/>
    <property type="project" value="UniProtKB"/>
</dbReference>
<dbReference type="GO" id="GO:0099645">
    <property type="term" value="P:neurotransmitter receptor localization to postsynaptic specialization membrane"/>
    <property type="evidence" value="ECO:0007669"/>
    <property type="project" value="Ensembl"/>
</dbReference>
<dbReference type="GO" id="GO:1904778">
    <property type="term" value="P:positive regulation of protein localization to cell cortex"/>
    <property type="evidence" value="ECO:0000315"/>
    <property type="project" value="UniProtKB"/>
</dbReference>
<dbReference type="GO" id="GO:1905832">
    <property type="term" value="P:positive regulation of spindle assembly"/>
    <property type="evidence" value="ECO:0000315"/>
    <property type="project" value="UniProtKB"/>
</dbReference>
<dbReference type="GO" id="GO:0060236">
    <property type="term" value="P:regulation of mitotic spindle organization"/>
    <property type="evidence" value="ECO:0000315"/>
    <property type="project" value="UniProtKB"/>
</dbReference>
<dbReference type="GO" id="GO:0009642">
    <property type="term" value="P:response to light intensity"/>
    <property type="evidence" value="ECO:0007669"/>
    <property type="project" value="Ensembl"/>
</dbReference>
<dbReference type="FunFam" id="1.25.40.10:FF:000192">
    <property type="entry name" value="G-protein-signaling modulator 1 isoform a"/>
    <property type="match status" value="1"/>
</dbReference>
<dbReference type="FunFam" id="1.25.40.10:FF:000043">
    <property type="entry name" value="G-protein-signaling modulator 2 isoform X1"/>
    <property type="match status" value="1"/>
</dbReference>
<dbReference type="Gene3D" id="1.25.40.10">
    <property type="entry name" value="Tetratricopeptide repeat domain"/>
    <property type="match status" value="3"/>
</dbReference>
<dbReference type="IDEAL" id="IID00313"/>
<dbReference type="InterPro" id="IPR003109">
    <property type="entry name" value="GoLoco_motif"/>
</dbReference>
<dbReference type="InterPro" id="IPR052386">
    <property type="entry name" value="GPSM"/>
</dbReference>
<dbReference type="InterPro" id="IPR011990">
    <property type="entry name" value="TPR-like_helical_dom_sf"/>
</dbReference>
<dbReference type="InterPro" id="IPR019734">
    <property type="entry name" value="TPR_rpt"/>
</dbReference>
<dbReference type="PANTHER" id="PTHR45954:SF3">
    <property type="entry name" value="G-PROTEIN-SIGNALING MODULATOR 2"/>
    <property type="match status" value="1"/>
</dbReference>
<dbReference type="PANTHER" id="PTHR45954">
    <property type="entry name" value="LD33695P"/>
    <property type="match status" value="1"/>
</dbReference>
<dbReference type="Pfam" id="PF02188">
    <property type="entry name" value="GoLoco"/>
    <property type="match status" value="4"/>
</dbReference>
<dbReference type="Pfam" id="PF13374">
    <property type="entry name" value="TPR_10"/>
    <property type="match status" value="1"/>
</dbReference>
<dbReference type="Pfam" id="PF13424">
    <property type="entry name" value="TPR_12"/>
    <property type="match status" value="2"/>
</dbReference>
<dbReference type="Pfam" id="PF13176">
    <property type="entry name" value="TPR_7"/>
    <property type="match status" value="1"/>
</dbReference>
<dbReference type="Pfam" id="PF13181">
    <property type="entry name" value="TPR_8"/>
    <property type="match status" value="1"/>
</dbReference>
<dbReference type="SMART" id="SM00390">
    <property type="entry name" value="GoLoco"/>
    <property type="match status" value="4"/>
</dbReference>
<dbReference type="SMART" id="SM00028">
    <property type="entry name" value="TPR"/>
    <property type="match status" value="7"/>
</dbReference>
<dbReference type="SUPFAM" id="SSF48452">
    <property type="entry name" value="TPR-like"/>
    <property type="match status" value="2"/>
</dbReference>
<dbReference type="PROSITE" id="PS50877">
    <property type="entry name" value="GOLOCO"/>
    <property type="match status" value="4"/>
</dbReference>
<dbReference type="PROSITE" id="PS50005">
    <property type="entry name" value="TPR"/>
    <property type="match status" value="6"/>
</dbReference>
<dbReference type="PROSITE" id="PS50293">
    <property type="entry name" value="TPR_REGION"/>
    <property type="match status" value="2"/>
</dbReference>
<comment type="function">
    <text evidence="1 4 5 8 10">Plays an important role in mitotic spindle pole organization via its interaction with NUMA1 (PubMed:11781568, PubMed:15632202, PubMed:21816348). Required for cortical dynein-dynactin complex recruitment during metaphase (PubMed:22327364). Plays a role in metaphase spindle orientation (PubMed:22327364). Also plays an important role in asymmetric cell divisions (PubMed:21816348). Has guanine nucleotide dissociation inhibitor (GDI) activity towards G(i) alpha proteins, such as GNAI1 and GNAI3, and thereby regulates their activity (By similarity).</text>
</comment>
<comment type="subunit">
    <text evidence="1 4 5 6 9 10 12 13 14 15">Interacts with the dynein-dynactin complex; this interaction is inhibited in a PLK1-dependent manner (PubMed:22327364). Part of a spindle orientation complex at least composed of GNAI1, GPSM2 and NUMA1 (PubMed:26766442). Interacts with LLGL2 (PubMed:15632202). Interacts (via TPR repeat region) with INSC/inscuteable (PubMed:16458856, PubMed:22074847). Interacts (via TPR repeat region) with NUMA1 (via C-terminus); this interaction is direct, inhibited in a PLK1-dependent manner, prevents the binding of NUMA1 with SPAG5 and promotes spindle pole organization (PubMed:11781568, PubMed:22327364, PubMed:27462074). INSC and NUMA1 compete for the same binding site, but INSC has higher affinity and can displace NUMA1 (in vitro) (PubMed:22074847). Interacts with GNAI2 (PubMed:8973305). Interacts (via GoLoco domains) with the GDP-bound form of GNAI1 and GNAI3; has much lower affinity for the GTP-bound form. Interaction with GDP-bound GNAI3 strongly enhances the affinity for NUMA1 (By similarity). Interacts (via TPR repeat region) with FRMPD1 (PubMed:22074847). INSC and FRMPD1 compete for the same binding site, but INSC has higher affinity and can displace FRMPD1 (in vitro) (By similarity). Interacts (via TPR repeat region) with FRMPD4 (PubMed:22074847, PubMed:25664792). Identified in a complex with INSC and F2RL2/Par3 (PubMed:16458856). Interacts with TASOR (By similarity).</text>
</comment>
<comment type="interaction">
    <interactant intactId="EBI-618655">
        <id>P81274</id>
    </interactant>
    <interactant intactId="EBI-10275150">
        <id>Q8TER5-2</id>
        <label>ARHGEF40</label>
    </interactant>
    <organismsDiffer>false</organismsDiffer>
    <experiments>3</experiments>
</comment>
<comment type="interaction">
    <interactant intactId="EBI-618655">
        <id>P81274</id>
    </interactant>
    <interactant intactId="EBI-10981762">
        <id>Q99501</id>
        <label>GAS2L1</label>
    </interactant>
    <organismsDiffer>false</organismsDiffer>
    <experiments>3</experiments>
</comment>
<comment type="interaction">
    <interactant intactId="EBI-618655">
        <id>P81274</id>
    </interactant>
    <interactant intactId="EBI-618639">
        <id>P63096</id>
        <label>GNAI1</label>
    </interactant>
    <organismsDiffer>false</organismsDiffer>
    <experiments>3</experiments>
</comment>
<comment type="interaction">
    <interactant intactId="EBI-618655">
        <id>P81274</id>
    </interactant>
    <interactant intactId="EBI-357563">
        <id>P08754</id>
        <label>GNAI3</label>
    </interactant>
    <organismsDiffer>false</organismsDiffer>
    <experiments>3</experiments>
</comment>
<comment type="interaction">
    <interactant intactId="EBI-618655">
        <id>P81274</id>
    </interactant>
    <interactant intactId="EBI-618655">
        <id>P81274</id>
        <label>GPSM2</label>
    </interactant>
    <organismsDiffer>false</organismsDiffer>
    <experiments>7</experiments>
</comment>
<comment type="interaction">
    <interactant intactId="EBI-618655">
        <id>P81274</id>
    </interactant>
    <interactant intactId="EBI-12081118">
        <id>Q1MX18</id>
        <label>INSC</label>
    </interactant>
    <organismsDiffer>false</organismsDiffer>
    <experiments>4</experiments>
</comment>
<comment type="interaction">
    <interactant intactId="EBI-618655">
        <id>P81274</id>
    </interactant>
    <interactant intactId="EBI-8647013">
        <id>Q6NSJ5</id>
        <label>LRRC8E</label>
    </interactant>
    <organismsDiffer>false</organismsDiffer>
    <experiments>3</experiments>
</comment>
<comment type="interaction">
    <interactant intactId="EBI-618655">
        <id>P81274</id>
    </interactant>
    <interactant intactId="EBI-521611">
        <id>Q14980</id>
        <label>NUMA1</label>
    </interactant>
    <organismsDiffer>false</organismsDiffer>
    <experiments>6</experiments>
</comment>
<comment type="interaction">
    <interactant intactId="EBI-618655">
        <id>P81274</id>
    </interactant>
    <interactant intactId="EBI-310886">
        <id>Q9P202</id>
        <label>WHRN</label>
    </interactant>
    <organismsDiffer>false</organismsDiffer>
    <experiments>3</experiments>
</comment>
<comment type="subcellular location">
    <subcellularLocation>
        <location evidence="4 5 9">Cytoplasm</location>
    </subcellularLocation>
    <subcellularLocation>
        <location evidence="5 8 9 10">Cytoplasm</location>
        <location evidence="5 8 9 10">Cell cortex</location>
    </subcellularLocation>
    <subcellularLocation>
        <location evidence="4 8">Cytoplasm</location>
        <location evidence="4 8">Cytoskeleton</location>
        <location evidence="4 8">Spindle pole</location>
    </subcellularLocation>
    <subcellularLocation>
        <location evidence="13">Lateral cell membrane</location>
    </subcellularLocation>
    <text evidence="1 4 5 8 9 10">Localizes in the cytoplasm during interphase and at cell cortex during metaphase (PubMed:11781568, PubMed:15632202, PubMed:22074847). Colocalizes with NUMA1 to mitotic spindle poles (PubMed:11781568, PubMed:21816348). Localized at the central and lateral cell cortex regions in a RanGTP-dependent manner (PubMed:22327364). In horizontally retinal progenitor dividing cells, localized to the lateral cortical region. In vertically retinal progenitor dividing cells, localized at the polar cortical region (By similarity).</text>
</comment>
<comment type="tissue specificity">
    <text>Ubiquitously expressed.</text>
</comment>
<comment type="disease" evidence="7 11">
    <disease id="DI-02897">
        <name>Chudley-McCullough syndrome</name>
        <acronym>CMCS</acronym>
        <description>An autosomal recessive neurologic disorder characterized by early-onset sensorineural deafness and specific brain anomalies on MRI, including hypoplasia of the corpus callosum, enlarged cysterna magna with mild focal cerebellar dysplasia, and nodular heterotopia. Some patients have hydrocephalus. Psychomotor development is normal.</description>
        <dbReference type="MIM" id="604213"/>
    </disease>
    <text>The disease is caused by variants affecting the gene represented in this entry.</text>
</comment>
<comment type="miscellaneous">
    <text evidence="17">Dysfunction of LGN is associated with the phenotype of multiple micronuclei due to chromosomal mis-segregation and defect in cell division through mis-localization of mitotic spindle regulator protein NUMA1.</text>
</comment>
<comment type="similarity">
    <text evidence="17">Belongs to the GPSM family.</text>
</comment>
<comment type="caution">
    <text evidence="17">It is uncertain whether Met-1 or Met-8 is the initiator.</text>
</comment>
<comment type="caution">
    <text evidence="18 19">Mutations in GPSM2 have been identified in people with profound congenital non-syndromic deafness designated as DFNB82 (PubMed:20602914). Subsequent brain imaging of these individuals has revealed frontal polymicrogyria, abnormal corpus callosum, and gray matter heterotopia, consistent with a diagnosis of Chudley-McCullough syndrome (PubMed:22578326).</text>
</comment>
<comment type="sequence caution" evidence="17">
    <conflict type="erroneous initiation">
        <sequence resource="EMBL-CDS" id="AAB40385"/>
    </conflict>
    <text>Truncated N-terminus.</text>
</comment>
<comment type="sequence caution" evidence="17">
    <conflict type="erroneous initiation">
        <sequence resource="EMBL-CDS" id="AAH27732"/>
    </conflict>
    <text>Truncated N-terminus.</text>
</comment>
<feature type="chain" id="PRO_0000106358" description="G-protein-signaling modulator 2">
    <location>
        <begin position="1"/>
        <end position="684"/>
    </location>
</feature>
<feature type="repeat" description="TPR 1">
    <location>
        <begin position="24"/>
        <end position="57"/>
    </location>
</feature>
<feature type="repeat" description="TPR 2">
    <location>
        <begin position="62"/>
        <end position="95"/>
    </location>
</feature>
<feature type="repeat" description="TPR 3">
    <location>
        <begin position="102"/>
        <end position="135"/>
    </location>
</feature>
<feature type="repeat" description="TPR 4">
    <location>
        <begin position="142"/>
        <end position="184"/>
    </location>
</feature>
<feature type="repeat" description="TPR 5">
    <location>
        <begin position="202"/>
        <end position="235"/>
    </location>
</feature>
<feature type="repeat" description="TPR 6">
    <location>
        <begin position="242"/>
        <end position="275"/>
    </location>
</feature>
<feature type="repeat" description="TPR 7">
    <location>
        <begin position="282"/>
        <end position="315"/>
    </location>
</feature>
<feature type="repeat" description="TPR 8">
    <location>
        <begin position="322"/>
        <end position="355"/>
    </location>
</feature>
<feature type="domain" description="GoLoco 1" evidence="3">
    <location>
        <begin position="489"/>
        <end position="511"/>
    </location>
</feature>
<feature type="domain" description="GoLoco 2" evidence="3">
    <location>
        <begin position="544"/>
        <end position="566"/>
    </location>
</feature>
<feature type="domain" description="GoLoco 3" evidence="3">
    <location>
        <begin position="594"/>
        <end position="616"/>
    </location>
</feature>
<feature type="domain" description="GoLoco 4" evidence="3">
    <location>
        <begin position="628"/>
        <end position="650"/>
    </location>
</feature>
<feature type="region of interest" description="Important for interaction with NUMA1; INSC and FRMPD1" evidence="1">
    <location>
        <begin position="22"/>
        <end position="357"/>
    </location>
</feature>
<feature type="binding site" evidence="1">
    <location>
        <position position="608"/>
    </location>
    <ligand>
        <name>GDP</name>
        <dbReference type="ChEBI" id="CHEBI:58189"/>
        <note>ligand shared between dimeric partners</note>
    </ligand>
</feature>
<feature type="binding site" evidence="1">
    <location>
        <position position="613"/>
    </location>
    <ligand>
        <name>GDP</name>
        <dbReference type="ChEBI" id="CHEBI:58189"/>
        <note>ligand shared between dimeric partners</note>
    </ligand>
</feature>
<feature type="binding site" evidence="1">
    <location>
        <position position="642"/>
    </location>
    <ligand>
        <name>GDP</name>
        <dbReference type="ChEBI" id="CHEBI:58189"/>
        <note>ligand shared between dimeric partners</note>
    </ligand>
</feature>
<feature type="binding site" evidence="1">
    <location>
        <position position="647"/>
    </location>
    <ligand>
        <name>GDP</name>
        <dbReference type="ChEBI" id="CHEBI:58189"/>
        <note>ligand shared between dimeric partners</note>
    </ligand>
</feature>
<feature type="modified residue" description="Phosphoserine; by PKG" evidence="2">
    <location>
        <position position="132"/>
    </location>
</feature>
<feature type="modified residue" description="Phosphoserine; by PKG" evidence="2">
    <location>
        <position position="352"/>
    </location>
</feature>
<feature type="modified residue" description="Phosphoserine" evidence="21">
    <location>
        <position position="408"/>
    </location>
</feature>
<feature type="modified residue" description="Phosphoserine" evidence="20">
    <location>
        <position position="483"/>
    </location>
</feature>
<feature type="modified residue" description="Phosphothreonine" evidence="20">
    <location>
        <position position="486"/>
    </location>
</feature>
<feature type="modified residue" description="Phosphoserine; by PKC" evidence="2">
    <location>
        <position position="501"/>
    </location>
</feature>
<feature type="modified residue" description="Phosphoserine" evidence="20">
    <location>
        <position position="541"/>
    </location>
</feature>
<feature type="modified residue" description="Phosphoserine" evidence="21 22">
    <location>
        <position position="565"/>
    </location>
</feature>
<feature type="modified residue" description="Phosphoserine; by PKG" evidence="2">
    <location>
        <position position="607"/>
    </location>
</feature>
<feature type="mutagenesis site" description="Abolishes location at mitotic spindle poles; when associated with A-243." evidence="8">
    <original>R</original>
    <variation>A</variation>
    <location>
        <position position="228"/>
    </location>
</feature>
<feature type="mutagenesis site" description="Strongly reduces interaction with INSC. Abolishes interaction with INSC; when associated with R-290." evidence="9">
    <original>R</original>
    <variation>E</variation>
    <location>
        <position position="228"/>
    </location>
</feature>
<feature type="mutagenesis site" description="Abolishes location at mitotic spindle poles; when associated with A-228." evidence="8">
    <original>R</original>
    <variation>A</variation>
    <location>
        <position position="243"/>
    </location>
</feature>
<feature type="mutagenesis site" description="Abolishes interaction with INSC; when associated with E-228." evidence="9">
    <original>N</original>
    <variation>R</variation>
    <location>
        <position position="290"/>
    </location>
</feature>
<feature type="sequence conflict" description="In Ref. 1; AAB40385." evidence="17" ref="1">
    <original>R</original>
    <variation>L</variation>
    <location>
        <position position="400"/>
    </location>
</feature>
<feature type="helix" evidence="24">
    <location>
        <begin position="24"/>
        <end position="36"/>
    </location>
</feature>
<feature type="helix" evidence="24">
    <location>
        <begin position="40"/>
        <end position="53"/>
    </location>
</feature>
<feature type="helix" evidence="24">
    <location>
        <begin position="58"/>
        <end position="74"/>
    </location>
</feature>
<feature type="helix" evidence="24">
    <location>
        <begin position="78"/>
        <end position="94"/>
    </location>
</feature>
<feature type="helix" evidence="24">
    <location>
        <begin position="98"/>
        <end position="115"/>
    </location>
</feature>
<feature type="helix" evidence="24">
    <location>
        <begin position="118"/>
        <end position="134"/>
    </location>
</feature>
<feature type="helix" evidence="24">
    <location>
        <begin position="138"/>
        <end position="158"/>
    </location>
</feature>
<feature type="helix" evidence="25">
    <location>
        <begin position="165"/>
        <end position="168"/>
    </location>
</feature>
<feature type="helix" evidence="24">
    <location>
        <begin position="172"/>
        <end position="194"/>
    </location>
</feature>
<feature type="helix" evidence="24">
    <location>
        <begin position="198"/>
        <end position="215"/>
    </location>
</feature>
<feature type="helix" evidence="24">
    <location>
        <begin position="218"/>
        <end position="234"/>
    </location>
</feature>
<feature type="helix" evidence="24">
    <location>
        <begin position="238"/>
        <end position="254"/>
    </location>
</feature>
<feature type="helix" evidence="24">
    <location>
        <begin position="258"/>
        <end position="272"/>
    </location>
</feature>
<feature type="helix" evidence="24">
    <location>
        <begin position="278"/>
        <end position="294"/>
    </location>
</feature>
<feature type="helix" evidence="24">
    <location>
        <begin position="298"/>
        <end position="314"/>
    </location>
</feature>
<feature type="helix" evidence="24">
    <location>
        <begin position="318"/>
        <end position="334"/>
    </location>
</feature>
<feature type="helix" evidence="24">
    <location>
        <begin position="338"/>
        <end position="354"/>
    </location>
</feature>
<feature type="helix" evidence="23">
    <location>
        <begin position="358"/>
        <end position="376"/>
    </location>
</feature>